<dbReference type="EMBL" id="CP000436">
    <property type="protein sequence ID" value="ABI24448.1"/>
    <property type="molecule type" value="Genomic_DNA"/>
</dbReference>
<dbReference type="SMR" id="Q0I0V1"/>
<dbReference type="KEGG" id="hso:HS_0170"/>
<dbReference type="eggNOG" id="COG0081">
    <property type="taxonomic scope" value="Bacteria"/>
</dbReference>
<dbReference type="HOGENOM" id="CLU_062853_0_0_6"/>
<dbReference type="GO" id="GO:0022625">
    <property type="term" value="C:cytosolic large ribosomal subunit"/>
    <property type="evidence" value="ECO:0007669"/>
    <property type="project" value="TreeGrafter"/>
</dbReference>
<dbReference type="GO" id="GO:0019843">
    <property type="term" value="F:rRNA binding"/>
    <property type="evidence" value="ECO:0007669"/>
    <property type="project" value="UniProtKB-UniRule"/>
</dbReference>
<dbReference type="GO" id="GO:0003735">
    <property type="term" value="F:structural constituent of ribosome"/>
    <property type="evidence" value="ECO:0007669"/>
    <property type="project" value="InterPro"/>
</dbReference>
<dbReference type="GO" id="GO:0000049">
    <property type="term" value="F:tRNA binding"/>
    <property type="evidence" value="ECO:0007669"/>
    <property type="project" value="UniProtKB-KW"/>
</dbReference>
<dbReference type="GO" id="GO:0006417">
    <property type="term" value="P:regulation of translation"/>
    <property type="evidence" value="ECO:0007669"/>
    <property type="project" value="UniProtKB-KW"/>
</dbReference>
<dbReference type="GO" id="GO:0006412">
    <property type="term" value="P:translation"/>
    <property type="evidence" value="ECO:0007669"/>
    <property type="project" value="UniProtKB-UniRule"/>
</dbReference>
<dbReference type="CDD" id="cd00403">
    <property type="entry name" value="Ribosomal_L1"/>
    <property type="match status" value="1"/>
</dbReference>
<dbReference type="FunFam" id="3.40.50.790:FF:000001">
    <property type="entry name" value="50S ribosomal protein L1"/>
    <property type="match status" value="1"/>
</dbReference>
<dbReference type="Gene3D" id="3.30.190.20">
    <property type="match status" value="1"/>
</dbReference>
<dbReference type="Gene3D" id="3.40.50.790">
    <property type="match status" value="1"/>
</dbReference>
<dbReference type="HAMAP" id="MF_01318_B">
    <property type="entry name" value="Ribosomal_uL1_B"/>
    <property type="match status" value="1"/>
</dbReference>
<dbReference type="InterPro" id="IPR005878">
    <property type="entry name" value="Ribosom_uL1_bac-type"/>
</dbReference>
<dbReference type="InterPro" id="IPR002143">
    <property type="entry name" value="Ribosomal_uL1"/>
</dbReference>
<dbReference type="InterPro" id="IPR023674">
    <property type="entry name" value="Ribosomal_uL1-like"/>
</dbReference>
<dbReference type="InterPro" id="IPR028364">
    <property type="entry name" value="Ribosomal_uL1/biogenesis"/>
</dbReference>
<dbReference type="InterPro" id="IPR016095">
    <property type="entry name" value="Ribosomal_uL1_3-a/b-sand"/>
</dbReference>
<dbReference type="InterPro" id="IPR023673">
    <property type="entry name" value="Ribosomal_uL1_CS"/>
</dbReference>
<dbReference type="NCBIfam" id="TIGR01169">
    <property type="entry name" value="rplA_bact"/>
    <property type="match status" value="1"/>
</dbReference>
<dbReference type="PANTHER" id="PTHR36427">
    <property type="entry name" value="54S RIBOSOMAL PROTEIN L1, MITOCHONDRIAL"/>
    <property type="match status" value="1"/>
</dbReference>
<dbReference type="PANTHER" id="PTHR36427:SF3">
    <property type="entry name" value="LARGE RIBOSOMAL SUBUNIT PROTEIN UL1M"/>
    <property type="match status" value="1"/>
</dbReference>
<dbReference type="Pfam" id="PF00687">
    <property type="entry name" value="Ribosomal_L1"/>
    <property type="match status" value="1"/>
</dbReference>
<dbReference type="PIRSF" id="PIRSF002155">
    <property type="entry name" value="Ribosomal_L1"/>
    <property type="match status" value="1"/>
</dbReference>
<dbReference type="SUPFAM" id="SSF56808">
    <property type="entry name" value="Ribosomal protein L1"/>
    <property type="match status" value="1"/>
</dbReference>
<dbReference type="PROSITE" id="PS01199">
    <property type="entry name" value="RIBOSOMAL_L1"/>
    <property type="match status" value="1"/>
</dbReference>
<reference key="1">
    <citation type="journal article" date="2007" name="J. Bacteriol.">
        <title>Complete genome sequence of Haemophilus somnus (Histophilus somni) strain 129Pt and comparison to Haemophilus ducreyi 35000HP and Haemophilus influenzae Rd.</title>
        <authorList>
            <person name="Challacombe J.F."/>
            <person name="Duncan A.J."/>
            <person name="Brettin T.S."/>
            <person name="Bruce D."/>
            <person name="Chertkov O."/>
            <person name="Detter J.C."/>
            <person name="Han C.S."/>
            <person name="Misra M."/>
            <person name="Richardson P."/>
            <person name="Tapia R."/>
            <person name="Thayer N."/>
            <person name="Xie G."/>
            <person name="Inzana T.J."/>
        </authorList>
    </citation>
    <scope>NUCLEOTIDE SEQUENCE [LARGE SCALE GENOMIC DNA]</scope>
    <source>
        <strain>129Pt</strain>
    </source>
</reference>
<sequence length="229" mass="24140">MAKLTKRMKAIKAGVDSTKQYEINEAITVLKQFTSTKFVESVDVAVNLGIDARKSDQNVRGATVLPHGTGRSVRVAVFTQGANVDAAKAAGADLVGMEDLAEQIKKGEMNFDVVIASPDAMRVVGQLGQILGPRGLMPNPKVGTVTPNVAEAVKNAKSGQIRYRNDKNGIIHTTIGKANFSAEQLKENLQALLAALTKAKPATAKGIFIRKVSVSTTQGAGVAVDQSSL</sequence>
<comment type="function">
    <text evidence="1">Binds directly to 23S rRNA. The L1 stalk is quite mobile in the ribosome, and is involved in E site tRNA release.</text>
</comment>
<comment type="function">
    <text evidence="1">Protein L1 is also a translational repressor protein, it controls the translation of the L11 operon by binding to its mRNA.</text>
</comment>
<comment type="subunit">
    <text evidence="1">Part of the 50S ribosomal subunit.</text>
</comment>
<comment type="similarity">
    <text evidence="1">Belongs to the universal ribosomal protein uL1 family.</text>
</comment>
<gene>
    <name evidence="1" type="primary">rplA</name>
    <name type="ordered locus">HS_0170</name>
</gene>
<keyword id="KW-0678">Repressor</keyword>
<keyword id="KW-0687">Ribonucleoprotein</keyword>
<keyword id="KW-0689">Ribosomal protein</keyword>
<keyword id="KW-0694">RNA-binding</keyword>
<keyword id="KW-0699">rRNA-binding</keyword>
<keyword id="KW-0810">Translation regulation</keyword>
<keyword id="KW-0820">tRNA-binding</keyword>
<organism>
    <name type="scientific">Histophilus somni (strain 129Pt)</name>
    <name type="common">Haemophilus somnus</name>
    <dbReference type="NCBI Taxonomy" id="205914"/>
    <lineage>
        <taxon>Bacteria</taxon>
        <taxon>Pseudomonadati</taxon>
        <taxon>Pseudomonadota</taxon>
        <taxon>Gammaproteobacteria</taxon>
        <taxon>Pasteurellales</taxon>
        <taxon>Pasteurellaceae</taxon>
        <taxon>Histophilus</taxon>
    </lineage>
</organism>
<name>RL1_HISS1</name>
<accession>Q0I0V1</accession>
<evidence type="ECO:0000255" key="1">
    <source>
        <dbReference type="HAMAP-Rule" id="MF_01318"/>
    </source>
</evidence>
<evidence type="ECO:0000305" key="2"/>
<protein>
    <recommendedName>
        <fullName evidence="1">Large ribosomal subunit protein uL1</fullName>
    </recommendedName>
    <alternativeName>
        <fullName evidence="2">50S ribosomal protein L1</fullName>
    </alternativeName>
</protein>
<feature type="chain" id="PRO_0000308018" description="Large ribosomal subunit protein uL1">
    <location>
        <begin position="1"/>
        <end position="229"/>
    </location>
</feature>
<proteinExistence type="inferred from homology"/>